<evidence type="ECO:0000255" key="1">
    <source>
        <dbReference type="HAMAP-Rule" id="MF_00083"/>
    </source>
</evidence>
<evidence type="ECO:0000305" key="2"/>
<protein>
    <recommendedName>
        <fullName evidence="1">Peptidyl-tRNA hydrolase</fullName>
        <shortName evidence="1">Pth</shortName>
        <ecNumber evidence="1">3.1.1.29</ecNumber>
    </recommendedName>
</protein>
<proteinExistence type="inferred from homology"/>
<keyword id="KW-0963">Cytoplasm</keyword>
<keyword id="KW-0378">Hydrolase</keyword>
<keyword id="KW-0694">RNA-binding</keyword>
<keyword id="KW-0820">tRNA-binding</keyword>
<sequence length="196" mass="21443">MSQQIKLLVGLANPGPEYAKTRHNAGAWVVEELARVHNITLKNEAKFYGLTGRIVMNGQELRLLIPTTFMNLSGKAIAALAKFYQIQPEEIMVAHDELDLPPGIAKFKKGGGHGGHNGLRDTISKLGNNKEFYRLRIGIGHPGHKDKVAGFVLGKAPASEQSLLDATVDESVRCLDILIKDGLSKAQNRLHTFKAE</sequence>
<gene>
    <name evidence="1" type="primary">pth</name>
    <name type="ordered locus">VV0925</name>
</gene>
<accession>Q7MMZ2</accession>
<organism>
    <name type="scientific">Vibrio vulnificus (strain YJ016)</name>
    <dbReference type="NCBI Taxonomy" id="196600"/>
    <lineage>
        <taxon>Bacteria</taxon>
        <taxon>Pseudomonadati</taxon>
        <taxon>Pseudomonadota</taxon>
        <taxon>Gammaproteobacteria</taxon>
        <taxon>Vibrionales</taxon>
        <taxon>Vibrionaceae</taxon>
        <taxon>Vibrio</taxon>
    </lineage>
</organism>
<feature type="chain" id="PRO_0000187853" description="Peptidyl-tRNA hydrolase">
    <location>
        <begin position="1"/>
        <end position="196"/>
    </location>
</feature>
<feature type="active site" description="Proton acceptor" evidence="1">
    <location>
        <position position="23"/>
    </location>
</feature>
<feature type="binding site" evidence="1">
    <location>
        <position position="18"/>
    </location>
    <ligand>
        <name>tRNA</name>
        <dbReference type="ChEBI" id="CHEBI:17843"/>
    </ligand>
</feature>
<feature type="binding site" evidence="1">
    <location>
        <position position="69"/>
    </location>
    <ligand>
        <name>tRNA</name>
        <dbReference type="ChEBI" id="CHEBI:17843"/>
    </ligand>
</feature>
<feature type="binding site" evidence="1">
    <location>
        <position position="71"/>
    </location>
    <ligand>
        <name>tRNA</name>
        <dbReference type="ChEBI" id="CHEBI:17843"/>
    </ligand>
</feature>
<feature type="binding site" evidence="1">
    <location>
        <position position="117"/>
    </location>
    <ligand>
        <name>tRNA</name>
        <dbReference type="ChEBI" id="CHEBI:17843"/>
    </ligand>
</feature>
<feature type="site" description="Discriminates between blocked and unblocked aminoacyl-tRNA" evidence="1">
    <location>
        <position position="13"/>
    </location>
</feature>
<feature type="site" description="Stabilizes the basic form of H active site to accept a proton" evidence="1">
    <location>
        <position position="96"/>
    </location>
</feature>
<dbReference type="EC" id="3.1.1.29" evidence="1"/>
<dbReference type="EMBL" id="BA000037">
    <property type="protein sequence ID" value="BAC93689.1"/>
    <property type="status" value="ALT_INIT"/>
    <property type="molecule type" value="Genomic_DNA"/>
</dbReference>
<dbReference type="RefSeq" id="WP_011078372.1">
    <property type="nucleotide sequence ID" value="NC_005139.1"/>
</dbReference>
<dbReference type="SMR" id="Q7MMZ2"/>
<dbReference type="STRING" id="672.VV93_v1c08570"/>
<dbReference type="KEGG" id="vvy:VV0925"/>
<dbReference type="eggNOG" id="COG0193">
    <property type="taxonomic scope" value="Bacteria"/>
</dbReference>
<dbReference type="HOGENOM" id="CLU_062456_3_1_6"/>
<dbReference type="Proteomes" id="UP000002675">
    <property type="component" value="Chromosome I"/>
</dbReference>
<dbReference type="GO" id="GO:0005737">
    <property type="term" value="C:cytoplasm"/>
    <property type="evidence" value="ECO:0007669"/>
    <property type="project" value="UniProtKB-SubCell"/>
</dbReference>
<dbReference type="GO" id="GO:0004045">
    <property type="term" value="F:peptidyl-tRNA hydrolase activity"/>
    <property type="evidence" value="ECO:0007669"/>
    <property type="project" value="UniProtKB-UniRule"/>
</dbReference>
<dbReference type="GO" id="GO:0000049">
    <property type="term" value="F:tRNA binding"/>
    <property type="evidence" value="ECO:0007669"/>
    <property type="project" value="UniProtKB-UniRule"/>
</dbReference>
<dbReference type="GO" id="GO:0006515">
    <property type="term" value="P:protein quality control for misfolded or incompletely synthesized proteins"/>
    <property type="evidence" value="ECO:0007669"/>
    <property type="project" value="UniProtKB-UniRule"/>
</dbReference>
<dbReference type="GO" id="GO:0072344">
    <property type="term" value="P:rescue of stalled ribosome"/>
    <property type="evidence" value="ECO:0007669"/>
    <property type="project" value="UniProtKB-UniRule"/>
</dbReference>
<dbReference type="CDD" id="cd00462">
    <property type="entry name" value="PTH"/>
    <property type="match status" value="1"/>
</dbReference>
<dbReference type="FunFam" id="3.40.50.1470:FF:000001">
    <property type="entry name" value="Peptidyl-tRNA hydrolase"/>
    <property type="match status" value="1"/>
</dbReference>
<dbReference type="Gene3D" id="3.40.50.1470">
    <property type="entry name" value="Peptidyl-tRNA hydrolase"/>
    <property type="match status" value="1"/>
</dbReference>
<dbReference type="HAMAP" id="MF_00083">
    <property type="entry name" value="Pept_tRNA_hydro_bact"/>
    <property type="match status" value="1"/>
</dbReference>
<dbReference type="InterPro" id="IPR001328">
    <property type="entry name" value="Pept_tRNA_hydro"/>
</dbReference>
<dbReference type="InterPro" id="IPR018171">
    <property type="entry name" value="Pept_tRNA_hydro_CS"/>
</dbReference>
<dbReference type="InterPro" id="IPR036416">
    <property type="entry name" value="Pept_tRNA_hydro_sf"/>
</dbReference>
<dbReference type="NCBIfam" id="TIGR00447">
    <property type="entry name" value="pth"/>
    <property type="match status" value="1"/>
</dbReference>
<dbReference type="PANTHER" id="PTHR17224">
    <property type="entry name" value="PEPTIDYL-TRNA HYDROLASE"/>
    <property type="match status" value="1"/>
</dbReference>
<dbReference type="PANTHER" id="PTHR17224:SF1">
    <property type="entry name" value="PEPTIDYL-TRNA HYDROLASE"/>
    <property type="match status" value="1"/>
</dbReference>
<dbReference type="Pfam" id="PF01195">
    <property type="entry name" value="Pept_tRNA_hydro"/>
    <property type="match status" value="1"/>
</dbReference>
<dbReference type="SUPFAM" id="SSF53178">
    <property type="entry name" value="Peptidyl-tRNA hydrolase-like"/>
    <property type="match status" value="1"/>
</dbReference>
<dbReference type="PROSITE" id="PS01195">
    <property type="entry name" value="PEPT_TRNA_HYDROL_1"/>
    <property type="match status" value="1"/>
</dbReference>
<dbReference type="PROSITE" id="PS01196">
    <property type="entry name" value="PEPT_TRNA_HYDROL_2"/>
    <property type="match status" value="1"/>
</dbReference>
<name>PTH_VIBVY</name>
<comment type="function">
    <text evidence="1">Hydrolyzes ribosome-free peptidyl-tRNAs (with 1 or more amino acids incorporated), which drop off the ribosome during protein synthesis, or as a result of ribosome stalling.</text>
</comment>
<comment type="function">
    <text evidence="1">Catalyzes the release of premature peptidyl moieties from peptidyl-tRNA molecules trapped in stalled 50S ribosomal subunits, and thus maintains levels of free tRNAs and 50S ribosomes.</text>
</comment>
<comment type="catalytic activity">
    <reaction evidence="1">
        <text>an N-acyl-L-alpha-aminoacyl-tRNA + H2O = an N-acyl-L-amino acid + a tRNA + H(+)</text>
        <dbReference type="Rhea" id="RHEA:54448"/>
        <dbReference type="Rhea" id="RHEA-COMP:10123"/>
        <dbReference type="Rhea" id="RHEA-COMP:13883"/>
        <dbReference type="ChEBI" id="CHEBI:15377"/>
        <dbReference type="ChEBI" id="CHEBI:15378"/>
        <dbReference type="ChEBI" id="CHEBI:59874"/>
        <dbReference type="ChEBI" id="CHEBI:78442"/>
        <dbReference type="ChEBI" id="CHEBI:138191"/>
        <dbReference type="EC" id="3.1.1.29"/>
    </reaction>
</comment>
<comment type="subunit">
    <text evidence="1">Monomer.</text>
</comment>
<comment type="subcellular location">
    <subcellularLocation>
        <location evidence="1">Cytoplasm</location>
    </subcellularLocation>
</comment>
<comment type="similarity">
    <text evidence="1">Belongs to the PTH family.</text>
</comment>
<comment type="sequence caution" evidence="2">
    <conflict type="erroneous initiation">
        <sequence resource="EMBL-CDS" id="BAC93689"/>
    </conflict>
    <text>Extended N-terminus.</text>
</comment>
<reference key="1">
    <citation type="journal article" date="2003" name="Genome Res.">
        <title>Comparative genome analysis of Vibrio vulnificus, a marine pathogen.</title>
        <authorList>
            <person name="Chen C.-Y."/>
            <person name="Wu K.-M."/>
            <person name="Chang Y.-C."/>
            <person name="Chang C.-H."/>
            <person name="Tsai H.-C."/>
            <person name="Liao T.-L."/>
            <person name="Liu Y.-M."/>
            <person name="Chen H.-J."/>
            <person name="Shen A.B.-T."/>
            <person name="Li J.-C."/>
            <person name="Su T.-L."/>
            <person name="Shao C.-P."/>
            <person name="Lee C.-T."/>
            <person name="Hor L.-I."/>
            <person name="Tsai S.-F."/>
        </authorList>
    </citation>
    <scope>NUCLEOTIDE SEQUENCE [LARGE SCALE GENOMIC DNA]</scope>
    <source>
        <strain>YJ016</strain>
    </source>
</reference>